<organism>
    <name type="scientific">Arabidopsis thaliana</name>
    <name type="common">Mouse-ear cress</name>
    <dbReference type="NCBI Taxonomy" id="3702"/>
    <lineage>
        <taxon>Eukaryota</taxon>
        <taxon>Viridiplantae</taxon>
        <taxon>Streptophyta</taxon>
        <taxon>Embryophyta</taxon>
        <taxon>Tracheophyta</taxon>
        <taxon>Spermatophyta</taxon>
        <taxon>Magnoliopsida</taxon>
        <taxon>eudicotyledons</taxon>
        <taxon>Gunneridae</taxon>
        <taxon>Pentapetalae</taxon>
        <taxon>rosids</taxon>
        <taxon>malvids</taxon>
        <taxon>Brassicales</taxon>
        <taxon>Brassicaceae</taxon>
        <taxon>Camelineae</taxon>
        <taxon>Arabidopsis</taxon>
    </lineage>
</organism>
<feature type="chain" id="PRO_0000432043" description="AT-hook motif nuclear-localized protein 25">
    <location>
        <begin position="1"/>
        <end position="299"/>
    </location>
</feature>
<feature type="domain" description="PPC" evidence="2">
    <location>
        <begin position="87"/>
        <end position="233"/>
    </location>
</feature>
<feature type="DNA-binding region" description="A.T hook" evidence="8">
    <location>
        <begin position="63"/>
        <end position="75"/>
    </location>
</feature>
<feature type="region of interest" description="Disordered" evidence="3">
    <location>
        <begin position="1"/>
        <end position="87"/>
    </location>
</feature>
<feature type="region of interest" description="Disordered" evidence="3">
    <location>
        <begin position="216"/>
        <end position="251"/>
    </location>
</feature>
<feature type="compositionally biased region" description="Basic and acidic residues" evidence="3">
    <location>
        <begin position="14"/>
        <end position="23"/>
    </location>
</feature>
<feature type="compositionally biased region" description="Basic and acidic residues" evidence="3">
    <location>
        <begin position="33"/>
        <end position="42"/>
    </location>
</feature>
<feature type="compositionally biased region" description="Low complexity" evidence="3">
    <location>
        <begin position="44"/>
        <end position="72"/>
    </location>
</feature>
<feature type="compositionally biased region" description="Low complexity" evidence="3">
    <location>
        <begin position="224"/>
        <end position="239"/>
    </location>
</feature>
<feature type="compositionally biased region" description="Polar residues" evidence="3">
    <location>
        <begin position="240"/>
        <end position="251"/>
    </location>
</feature>
<reference key="1">
    <citation type="journal article" date="1999" name="Nature">
        <title>Sequence and analysis of chromosome 4 of the plant Arabidopsis thaliana.</title>
        <authorList>
            <person name="Mayer K.F.X."/>
            <person name="Schueller C."/>
            <person name="Wambutt R."/>
            <person name="Murphy G."/>
            <person name="Volckaert G."/>
            <person name="Pohl T."/>
            <person name="Duesterhoeft A."/>
            <person name="Stiekema W."/>
            <person name="Entian K.-D."/>
            <person name="Terryn N."/>
            <person name="Harris B."/>
            <person name="Ansorge W."/>
            <person name="Brandt P."/>
            <person name="Grivell L.A."/>
            <person name="Rieger M."/>
            <person name="Weichselgartner M."/>
            <person name="de Simone V."/>
            <person name="Obermaier B."/>
            <person name="Mache R."/>
            <person name="Mueller M."/>
            <person name="Kreis M."/>
            <person name="Delseny M."/>
            <person name="Puigdomenech P."/>
            <person name="Watson M."/>
            <person name="Schmidtheini T."/>
            <person name="Reichert B."/>
            <person name="Portetelle D."/>
            <person name="Perez-Alonso M."/>
            <person name="Boutry M."/>
            <person name="Bancroft I."/>
            <person name="Vos P."/>
            <person name="Hoheisel J."/>
            <person name="Zimmermann W."/>
            <person name="Wedler H."/>
            <person name="Ridley P."/>
            <person name="Langham S.-A."/>
            <person name="McCullagh B."/>
            <person name="Bilham L."/>
            <person name="Robben J."/>
            <person name="van der Schueren J."/>
            <person name="Grymonprez B."/>
            <person name="Chuang Y.-J."/>
            <person name="Vandenbussche F."/>
            <person name="Braeken M."/>
            <person name="Weltjens I."/>
            <person name="Voet M."/>
            <person name="Bastiaens I."/>
            <person name="Aert R."/>
            <person name="Defoor E."/>
            <person name="Weitzenegger T."/>
            <person name="Bothe G."/>
            <person name="Ramsperger U."/>
            <person name="Hilbert H."/>
            <person name="Braun M."/>
            <person name="Holzer E."/>
            <person name="Brandt A."/>
            <person name="Peters S."/>
            <person name="van Staveren M."/>
            <person name="Dirkse W."/>
            <person name="Mooijman P."/>
            <person name="Klein Lankhorst R."/>
            <person name="Rose M."/>
            <person name="Hauf J."/>
            <person name="Koetter P."/>
            <person name="Berneiser S."/>
            <person name="Hempel S."/>
            <person name="Feldpausch M."/>
            <person name="Lamberth S."/>
            <person name="Van den Daele H."/>
            <person name="De Keyser A."/>
            <person name="Buysshaert C."/>
            <person name="Gielen J."/>
            <person name="Villarroel R."/>
            <person name="De Clercq R."/>
            <person name="van Montagu M."/>
            <person name="Rogers J."/>
            <person name="Cronin A."/>
            <person name="Quail M.A."/>
            <person name="Bray-Allen S."/>
            <person name="Clark L."/>
            <person name="Doggett J."/>
            <person name="Hall S."/>
            <person name="Kay M."/>
            <person name="Lennard N."/>
            <person name="McLay K."/>
            <person name="Mayes R."/>
            <person name="Pettett A."/>
            <person name="Rajandream M.A."/>
            <person name="Lyne M."/>
            <person name="Benes V."/>
            <person name="Rechmann S."/>
            <person name="Borkova D."/>
            <person name="Bloecker H."/>
            <person name="Scharfe M."/>
            <person name="Grimm M."/>
            <person name="Loehnert T.-H."/>
            <person name="Dose S."/>
            <person name="de Haan M."/>
            <person name="Maarse A.C."/>
            <person name="Schaefer M."/>
            <person name="Mueller-Auer S."/>
            <person name="Gabel C."/>
            <person name="Fuchs M."/>
            <person name="Fartmann B."/>
            <person name="Granderath K."/>
            <person name="Dauner D."/>
            <person name="Herzl A."/>
            <person name="Neumann S."/>
            <person name="Argiriou A."/>
            <person name="Vitale D."/>
            <person name="Liguori R."/>
            <person name="Piravandi E."/>
            <person name="Massenet O."/>
            <person name="Quigley F."/>
            <person name="Clabauld G."/>
            <person name="Muendlein A."/>
            <person name="Felber R."/>
            <person name="Schnabl S."/>
            <person name="Hiller R."/>
            <person name="Schmidt W."/>
            <person name="Lecharny A."/>
            <person name="Aubourg S."/>
            <person name="Chefdor F."/>
            <person name="Cooke R."/>
            <person name="Berger C."/>
            <person name="Monfort A."/>
            <person name="Casacuberta E."/>
            <person name="Gibbons T."/>
            <person name="Weber N."/>
            <person name="Vandenbol M."/>
            <person name="Bargues M."/>
            <person name="Terol J."/>
            <person name="Torres A."/>
            <person name="Perez-Perez A."/>
            <person name="Purnelle B."/>
            <person name="Bent E."/>
            <person name="Johnson S."/>
            <person name="Tacon D."/>
            <person name="Jesse T."/>
            <person name="Heijnen L."/>
            <person name="Schwarz S."/>
            <person name="Scholler P."/>
            <person name="Heber S."/>
            <person name="Francs P."/>
            <person name="Bielke C."/>
            <person name="Frishman D."/>
            <person name="Haase D."/>
            <person name="Lemcke K."/>
            <person name="Mewes H.-W."/>
            <person name="Stocker S."/>
            <person name="Zaccaria P."/>
            <person name="Bevan M."/>
            <person name="Wilson R.K."/>
            <person name="de la Bastide M."/>
            <person name="Habermann K."/>
            <person name="Parnell L."/>
            <person name="Dedhia N."/>
            <person name="Gnoj L."/>
            <person name="Schutz K."/>
            <person name="Huang E."/>
            <person name="Spiegel L."/>
            <person name="Sekhon M."/>
            <person name="Murray J."/>
            <person name="Sheet P."/>
            <person name="Cordes M."/>
            <person name="Abu-Threideh J."/>
            <person name="Stoneking T."/>
            <person name="Kalicki J."/>
            <person name="Graves T."/>
            <person name="Harmon G."/>
            <person name="Edwards J."/>
            <person name="Latreille P."/>
            <person name="Courtney L."/>
            <person name="Cloud J."/>
            <person name="Abbott A."/>
            <person name="Scott K."/>
            <person name="Johnson D."/>
            <person name="Minx P."/>
            <person name="Bentley D."/>
            <person name="Fulton B."/>
            <person name="Miller N."/>
            <person name="Greco T."/>
            <person name="Kemp K."/>
            <person name="Kramer J."/>
            <person name="Fulton L."/>
            <person name="Mardis E."/>
            <person name="Dante M."/>
            <person name="Pepin K."/>
            <person name="Hillier L.W."/>
            <person name="Nelson J."/>
            <person name="Spieth J."/>
            <person name="Ryan E."/>
            <person name="Andrews S."/>
            <person name="Geisel C."/>
            <person name="Layman D."/>
            <person name="Du H."/>
            <person name="Ali J."/>
            <person name="Berghoff A."/>
            <person name="Jones K."/>
            <person name="Drone K."/>
            <person name="Cotton M."/>
            <person name="Joshu C."/>
            <person name="Antonoiu B."/>
            <person name="Zidanic M."/>
            <person name="Strong C."/>
            <person name="Sun H."/>
            <person name="Lamar B."/>
            <person name="Yordan C."/>
            <person name="Ma P."/>
            <person name="Zhong J."/>
            <person name="Preston R."/>
            <person name="Vil D."/>
            <person name="Shekher M."/>
            <person name="Matero A."/>
            <person name="Shah R."/>
            <person name="Swaby I.K."/>
            <person name="O'Shaughnessy A."/>
            <person name="Rodriguez M."/>
            <person name="Hoffman J."/>
            <person name="Till S."/>
            <person name="Granat S."/>
            <person name="Shohdy N."/>
            <person name="Hasegawa A."/>
            <person name="Hameed A."/>
            <person name="Lodhi M."/>
            <person name="Johnson A."/>
            <person name="Chen E."/>
            <person name="Marra M.A."/>
            <person name="Martienssen R."/>
            <person name="McCombie W.R."/>
        </authorList>
    </citation>
    <scope>NUCLEOTIDE SEQUENCE [LARGE SCALE GENOMIC DNA]</scope>
    <source>
        <strain>cv. Columbia</strain>
    </source>
</reference>
<reference key="2">
    <citation type="journal article" date="2017" name="Plant J.">
        <title>Araport11: a complete reannotation of the Arabidopsis thaliana reference genome.</title>
        <authorList>
            <person name="Cheng C.Y."/>
            <person name="Krishnakumar V."/>
            <person name="Chan A.P."/>
            <person name="Thibaud-Nissen F."/>
            <person name="Schobel S."/>
            <person name="Town C.D."/>
        </authorList>
    </citation>
    <scope>GENOME REANNOTATION</scope>
    <source>
        <strain>cv. Columbia</strain>
    </source>
</reference>
<reference key="3">
    <citation type="submission" date="2004-10" db="EMBL/GenBank/DDBJ databases">
        <title>Arabidopsis ORF clones.</title>
        <authorList>
            <person name="Kim C.J."/>
            <person name="Chen H."/>
            <person name="Cheuk R.F."/>
            <person name="Shinn P."/>
            <person name="Ecker J.R."/>
        </authorList>
    </citation>
    <scope>NUCLEOTIDE SEQUENCE [LARGE SCALE MRNA]</scope>
    <source>
        <strain>cv. Columbia</strain>
    </source>
</reference>
<reference key="4">
    <citation type="journal article" date="2004" name="Plant Mol. Biol.">
        <title>Identification of a novel plant MAR DNA binding protein localized on chromosomal surfaces.</title>
        <authorList>
            <person name="Fujimoto S."/>
            <person name="Matsunaga S."/>
            <person name="Yonemura M."/>
            <person name="Uchiyama S."/>
            <person name="Azuma T."/>
            <person name="Fukui K."/>
        </authorList>
    </citation>
    <scope>IDENTIFICATION</scope>
    <scope>GENE FAMILY</scope>
    <scope>NOMENCLATURE</scope>
    <source>
        <strain>cv. Columbia</strain>
    </source>
</reference>
<reference key="5">
    <citation type="journal article" date="2007" name="Plant Physiol.">
        <title>AGF1, an AT-hook protein, is necessary for the negative feedback of AtGA3ox1 encoding GA 3-oxidase.</title>
        <authorList>
            <person name="Matsushita A."/>
            <person name="Furumoto T."/>
            <person name="Ishida S."/>
            <person name="Takahashi Y."/>
        </authorList>
    </citation>
    <scope>FUNCTION</scope>
    <scope>TISSUE SPECIFICITY</scope>
    <scope>SUBCELLULAR LOCATION</scope>
</reference>
<reference key="6">
    <citation type="journal article" date="2013" name="Proc. Natl. Acad. Sci. U.S.A.">
        <title>Arabidopsis thaliana AHL family modulates hypocotyl growth redundantly by interacting with each other via the PPC/DUF296 domain.</title>
        <authorList>
            <person name="Zhao J."/>
            <person name="Favero D.S."/>
            <person name="Peng H."/>
            <person name="Neff M.M."/>
        </authorList>
    </citation>
    <scope>GENE FAMILY</scope>
    <scope>SUBUNIT</scope>
    <scope>INTERACTION WITH AHL27 AND AHL29</scope>
    <scope>DOMAIN PPC</scope>
</reference>
<accession>Q6DBQ1</accession>
<accession>O65489</accession>
<keyword id="KW-0010">Activator</keyword>
<keyword id="KW-0238">DNA-binding</keyword>
<keyword id="KW-0539">Nucleus</keyword>
<keyword id="KW-1185">Reference proteome</keyword>
<keyword id="KW-0804">Transcription</keyword>
<keyword id="KW-0805">Transcription regulation</keyword>
<comment type="function">
    <text evidence="1 4">Transcription factor that specifically binds AT-rich DNA sequences related to the nuclear matrix attachment regions (MARs) (By similarity). Binds the DNA sequence GNFEI (GA-negative feedback element I) in the GA3OX1 promoter. Binding to GNFEI sequence is required for GA-negative feedback regulation of GA3OX1.</text>
</comment>
<comment type="subunit">
    <text evidence="5">Homodimer. Interacts with AHL27 and AHL29.</text>
</comment>
<comment type="subcellular location">
    <subcellularLocation>
        <location evidence="4">Nucleus</location>
    </subcellularLocation>
</comment>
<comment type="tissue specificity">
    <text evidence="4">Expressed in seedlings, leaves, stems, floral tips and flowers.</text>
</comment>
<comment type="domain">
    <text evidence="5">The PPC domain mediates interactions between AHL proteins.</text>
</comment>
<comment type="sequence caution" evidence="8">
    <conflict type="erroneous initiation">
        <sequence resource="EMBL-CDS" id="CAA18730"/>
    </conflict>
    <text>Truncated N-terminus.</text>
</comment>
<comment type="sequence caution" evidence="8">
    <conflict type="erroneous initiation">
        <sequence resource="EMBL-CDS" id="CAB80256"/>
    </conflict>
    <text>Truncated N-terminus.</text>
</comment>
<protein>
    <recommendedName>
        <fullName evidence="11">AT-hook motif nuclear-localized protein 25</fullName>
    </recommendedName>
    <alternativeName>
        <fullName evidence="7">AT-hook protein of GA feedback 1</fullName>
    </alternativeName>
</protein>
<sequence length="299" mass="30148">MSSYMHPLLGQELHLQRPEDSRTPPDQNNMELNRSEADEAKAETTPTGGATSSATASGSSSGRRPRGRPAGSKNKPKPPTIITRDSPNVLRSHVLEVTSGSDISEAVSTYATRRGCGVCIISGTGAVTNVTIRQPAAPAGGGVITLHGRFDILSLTGTALPPPAPPGAGGLTVYLAGGQGQVVGGNVAGSLIASGPVVLMAASFANAVYDRLPIEEEETPPPRTTGVQQQQPEASQSSEVTGSGAQACESNLQGGNGGGGVAFYNLGMNMNNFQFSGGDIYGMSGGSGGGGGGATRPAF</sequence>
<name>AHL25_ARATH</name>
<proteinExistence type="evidence at protein level"/>
<evidence type="ECO:0000250" key="1">
    <source>
        <dbReference type="UniProtKB" id="Q8VYJ2"/>
    </source>
</evidence>
<evidence type="ECO:0000255" key="2">
    <source>
        <dbReference type="PROSITE-ProRule" id="PRU01078"/>
    </source>
</evidence>
<evidence type="ECO:0000256" key="3">
    <source>
        <dbReference type="SAM" id="MobiDB-lite"/>
    </source>
</evidence>
<evidence type="ECO:0000269" key="4">
    <source>
    </source>
</evidence>
<evidence type="ECO:0000269" key="5">
    <source>
    </source>
</evidence>
<evidence type="ECO:0000303" key="6">
    <source>
    </source>
</evidence>
<evidence type="ECO:0000303" key="7">
    <source>
    </source>
</evidence>
<evidence type="ECO:0000305" key="8"/>
<evidence type="ECO:0000312" key="9">
    <source>
        <dbReference type="Araport" id="AT4G35390"/>
    </source>
</evidence>
<evidence type="ECO:0000312" key="10">
    <source>
        <dbReference type="EMBL" id="CAA18730.1"/>
    </source>
</evidence>
<evidence type="ECO:0000312" key="11">
    <source>
        <dbReference type="EMBL" id="FAA00296.1"/>
    </source>
</evidence>
<dbReference type="EMBL" id="AL022604">
    <property type="protein sequence ID" value="CAA18730.1"/>
    <property type="status" value="ALT_INIT"/>
    <property type="molecule type" value="Genomic_DNA"/>
</dbReference>
<dbReference type="EMBL" id="AL161587">
    <property type="protein sequence ID" value="CAB80256.1"/>
    <property type="status" value="ALT_INIT"/>
    <property type="molecule type" value="Genomic_DNA"/>
</dbReference>
<dbReference type="EMBL" id="CP002687">
    <property type="protein sequence ID" value="AEE86506.1"/>
    <property type="molecule type" value="Genomic_DNA"/>
</dbReference>
<dbReference type="EMBL" id="BT014971">
    <property type="protein sequence ID" value="AAT70422.1"/>
    <property type="molecule type" value="mRNA"/>
</dbReference>
<dbReference type="EMBL" id="BT015845">
    <property type="protein sequence ID" value="AAU94408.1"/>
    <property type="molecule type" value="mRNA"/>
</dbReference>
<dbReference type="EMBL" id="BR000361">
    <property type="protein sequence ID" value="FAA00296.1"/>
    <property type="molecule type" value="mRNA"/>
</dbReference>
<dbReference type="PIR" id="T06118">
    <property type="entry name" value="T06118"/>
</dbReference>
<dbReference type="RefSeq" id="NP_195265.2">
    <property type="nucleotide sequence ID" value="NM_119705.3"/>
</dbReference>
<dbReference type="SMR" id="Q6DBQ1"/>
<dbReference type="FunCoup" id="Q6DBQ1">
    <property type="interactions" value="97"/>
</dbReference>
<dbReference type="STRING" id="3702.Q6DBQ1"/>
<dbReference type="iPTMnet" id="Q6DBQ1"/>
<dbReference type="PaxDb" id="3702-AT4G35390.1"/>
<dbReference type="ProteomicsDB" id="244851"/>
<dbReference type="EnsemblPlants" id="AT4G35390.1">
    <property type="protein sequence ID" value="AT4G35390.1"/>
    <property type="gene ID" value="AT4G35390"/>
</dbReference>
<dbReference type="GeneID" id="829692"/>
<dbReference type="Gramene" id="AT4G35390.1">
    <property type="protein sequence ID" value="AT4G35390.1"/>
    <property type="gene ID" value="AT4G35390"/>
</dbReference>
<dbReference type="KEGG" id="ath:AT4G35390"/>
<dbReference type="Araport" id="AT4G35390"/>
<dbReference type="TAIR" id="AT4G35390">
    <property type="gene designation" value="AHL25"/>
</dbReference>
<dbReference type="eggNOG" id="ENOG502QV94">
    <property type="taxonomic scope" value="Eukaryota"/>
</dbReference>
<dbReference type="HOGENOM" id="CLU_039808_2_0_1"/>
<dbReference type="InParanoid" id="Q6DBQ1"/>
<dbReference type="OMA" id="SGAQACE"/>
<dbReference type="PhylomeDB" id="Q6DBQ1"/>
<dbReference type="PRO" id="PR:Q6DBQ1"/>
<dbReference type="Proteomes" id="UP000006548">
    <property type="component" value="Chromosome 4"/>
</dbReference>
<dbReference type="ExpressionAtlas" id="Q6DBQ1">
    <property type="expression patterns" value="baseline and differential"/>
</dbReference>
<dbReference type="GO" id="GO:0005634">
    <property type="term" value="C:nucleus"/>
    <property type="evidence" value="ECO:0000314"/>
    <property type="project" value="TAIR"/>
</dbReference>
<dbReference type="GO" id="GO:0003700">
    <property type="term" value="F:DNA-binding transcription factor activity"/>
    <property type="evidence" value="ECO:0000314"/>
    <property type="project" value="TAIR"/>
</dbReference>
<dbReference type="GO" id="GO:0003680">
    <property type="term" value="F:minor groove of adenine-thymine-rich DNA binding"/>
    <property type="evidence" value="ECO:0007669"/>
    <property type="project" value="InterPro"/>
</dbReference>
<dbReference type="GO" id="GO:0009938">
    <property type="term" value="P:negative regulation of gibberellic acid mediated signaling pathway"/>
    <property type="evidence" value="ECO:0000270"/>
    <property type="project" value="TAIR"/>
</dbReference>
<dbReference type="CDD" id="cd11378">
    <property type="entry name" value="DUF296"/>
    <property type="match status" value="1"/>
</dbReference>
<dbReference type="FunFam" id="3.30.1330.80:FF:000002">
    <property type="entry name" value="AT-hook motif nuclear-localized protein"/>
    <property type="match status" value="1"/>
</dbReference>
<dbReference type="Gene3D" id="3.30.1330.80">
    <property type="entry name" value="Hypothetical protein, similar to alpha- acetolactate decarboxylase, domain 2"/>
    <property type="match status" value="1"/>
</dbReference>
<dbReference type="InterPro" id="IPR014476">
    <property type="entry name" value="AHL15-29"/>
</dbReference>
<dbReference type="InterPro" id="IPR005175">
    <property type="entry name" value="PPC_dom"/>
</dbReference>
<dbReference type="PANTHER" id="PTHR31100">
    <property type="entry name" value="AT-HOOK MOTIF NUCLEAR-LOCALIZED PROTEIN 15"/>
    <property type="match status" value="1"/>
</dbReference>
<dbReference type="PANTHER" id="PTHR31100:SF16">
    <property type="entry name" value="AT-HOOK MOTIF NUCLEAR-LOCALIZED PROTEIN 25"/>
    <property type="match status" value="1"/>
</dbReference>
<dbReference type="Pfam" id="PF03479">
    <property type="entry name" value="PCC"/>
    <property type="match status" value="1"/>
</dbReference>
<dbReference type="PIRSF" id="PIRSF016021">
    <property type="entry name" value="ESCAROLA"/>
    <property type="match status" value="1"/>
</dbReference>
<dbReference type="SUPFAM" id="SSF117856">
    <property type="entry name" value="AF0104/ALDC/Ptd012-like"/>
    <property type="match status" value="1"/>
</dbReference>
<dbReference type="PROSITE" id="PS51742">
    <property type="entry name" value="PPC"/>
    <property type="match status" value="1"/>
</dbReference>
<gene>
    <name evidence="6" type="primary">AHL25</name>
    <name evidence="7" type="synonym">AGF1</name>
    <name type="synonym">HRC</name>
    <name evidence="9" type="ordered locus">At4g35390</name>
    <name evidence="10" type="ORF">F23E12.50</name>
</gene>